<proteinExistence type="predicted"/>
<sequence>MISKINGKLFADMIIQGAQNLSNNADLVDSLNVYPVPDGDTGTNMNLTMTSGREEVENNLSKNIGELGKTFSKGLLMGARGNSGVILSQLFRGFCKNIESESEINSKLLAESFQAGVETAYKAVMKPVEGTILTVAKDAAQAAVEKANNTEDCIELMEYIIVKANESLENTPNLLAVLKEVGVVDSGGKGLLCVYEGFLKALKGEKVEAKVAKLDKDEFVHDEHDFHGVINTEDIIYGYCTEMMVRFGKNKKAFDEQEFRQDMSQFGDSLLVINDEEIVKVHVHTEYPGKVFNYGQQYGELIKLKVENMREQHREVIRKEQHTAKPKMETVETAIITISMGEGISEIFKSMGATHIISGGQTMNPSTEDIVKVIEQSKCKRAIILPNNKNILMASEQAASIVDAEAVVIPTKSIPQGISALFQYDVDATLEENKAQMADSVNNVKSGSLTYAVRDTKIDGVEIKKDAFMGLIEDKIVSSKSDQLTTVTELLNEMLAEDSEILTVIIGQDAEQAVTDNMINWIEEQNPDVEVEVHEGGQPIYQYFFSVE</sequence>
<accession>Q2YXJ0</accession>
<name>Y1090_STAAB</name>
<evidence type="ECO:0000255" key="1">
    <source>
        <dbReference type="PROSITE-ProRule" id="PRU00813"/>
    </source>
</evidence>
<organism>
    <name type="scientific">Staphylococcus aureus (strain bovine RF122 / ET3-1)</name>
    <dbReference type="NCBI Taxonomy" id="273036"/>
    <lineage>
        <taxon>Bacteria</taxon>
        <taxon>Bacillati</taxon>
        <taxon>Bacillota</taxon>
        <taxon>Bacilli</taxon>
        <taxon>Bacillales</taxon>
        <taxon>Staphylococcaceae</taxon>
        <taxon>Staphylococcus</taxon>
    </lineage>
</organism>
<dbReference type="EMBL" id="AJ938182">
    <property type="protein sequence ID" value="CAI80779.1"/>
    <property type="molecule type" value="Genomic_DNA"/>
</dbReference>
<dbReference type="RefSeq" id="WP_000623914.1">
    <property type="nucleotide sequence ID" value="NC_007622.1"/>
</dbReference>
<dbReference type="SMR" id="Q2YXJ0"/>
<dbReference type="KEGG" id="sab:SAB1090"/>
<dbReference type="HOGENOM" id="CLU_017496_1_0_9"/>
<dbReference type="GO" id="GO:0004371">
    <property type="term" value="F:glycerone kinase activity"/>
    <property type="evidence" value="ECO:0007669"/>
    <property type="project" value="InterPro"/>
</dbReference>
<dbReference type="GO" id="GO:0006071">
    <property type="term" value="P:glycerol metabolic process"/>
    <property type="evidence" value="ECO:0007669"/>
    <property type="project" value="InterPro"/>
</dbReference>
<dbReference type="Gene3D" id="1.25.40.340">
    <property type="match status" value="1"/>
</dbReference>
<dbReference type="InterPro" id="IPR050270">
    <property type="entry name" value="DegV_domain_contain"/>
</dbReference>
<dbReference type="InterPro" id="IPR004007">
    <property type="entry name" value="DhaL_dom"/>
</dbReference>
<dbReference type="InterPro" id="IPR036117">
    <property type="entry name" value="DhaL_dom_sf"/>
</dbReference>
<dbReference type="InterPro" id="IPR033470">
    <property type="entry name" value="FakA-like_C"/>
</dbReference>
<dbReference type="InterPro" id="IPR048394">
    <property type="entry name" value="FakA-like_M"/>
</dbReference>
<dbReference type="InterPro" id="IPR019986">
    <property type="entry name" value="YloV-like"/>
</dbReference>
<dbReference type="NCBIfam" id="NF038248">
    <property type="entry name" value="FakA_VfrB"/>
    <property type="match status" value="1"/>
</dbReference>
<dbReference type="NCBIfam" id="TIGR03599">
    <property type="entry name" value="YloV"/>
    <property type="match status" value="1"/>
</dbReference>
<dbReference type="PANTHER" id="PTHR33434">
    <property type="entry name" value="DEGV DOMAIN-CONTAINING PROTEIN DR_1986-RELATED"/>
    <property type="match status" value="1"/>
</dbReference>
<dbReference type="PANTHER" id="PTHR33434:SF4">
    <property type="entry name" value="PHOSPHATASE PROTEIN"/>
    <property type="match status" value="1"/>
</dbReference>
<dbReference type="Pfam" id="PF02734">
    <property type="entry name" value="Dak2"/>
    <property type="match status" value="1"/>
</dbReference>
<dbReference type="Pfam" id="PF13684">
    <property type="entry name" value="FakA-like_C"/>
    <property type="match status" value="1"/>
</dbReference>
<dbReference type="Pfam" id="PF21645">
    <property type="entry name" value="FakA-like_M"/>
    <property type="match status" value="1"/>
</dbReference>
<dbReference type="SMART" id="SM01121">
    <property type="entry name" value="Dak1_2"/>
    <property type="match status" value="1"/>
</dbReference>
<dbReference type="SMART" id="SM01120">
    <property type="entry name" value="Dak2"/>
    <property type="match status" value="1"/>
</dbReference>
<dbReference type="SUPFAM" id="SSF101473">
    <property type="entry name" value="DhaL-like"/>
    <property type="match status" value="1"/>
</dbReference>
<dbReference type="PROSITE" id="PS51480">
    <property type="entry name" value="DHAL"/>
    <property type="match status" value="1"/>
</dbReference>
<reference key="1">
    <citation type="journal article" date="2007" name="PLoS ONE">
        <title>Molecular correlates of host specialization in Staphylococcus aureus.</title>
        <authorList>
            <person name="Herron-Olson L."/>
            <person name="Fitzgerald J.R."/>
            <person name="Musser J.M."/>
            <person name="Kapur V."/>
        </authorList>
    </citation>
    <scope>NUCLEOTIDE SEQUENCE [LARGE SCALE GENOMIC DNA]</scope>
    <source>
        <strain>bovine RF122 / ET3-1</strain>
    </source>
</reference>
<gene>
    <name type="ordered locus">SAB1090</name>
</gene>
<feature type="chain" id="PRO_0000304155" description="Uncharacterized protein SAB1090">
    <location>
        <begin position="1"/>
        <end position="548"/>
    </location>
</feature>
<feature type="domain" description="DhaL" evidence="1">
    <location>
        <begin position="8"/>
        <end position="200"/>
    </location>
</feature>
<protein>
    <recommendedName>
        <fullName>Uncharacterized protein SAB1090</fullName>
    </recommendedName>
</protein>